<comment type="function">
    <text>Acts specifically as a negative regulator of skeletal muscle growth.</text>
</comment>
<comment type="subunit">
    <text evidence="1">Homodimer; disulfide-linked.</text>
</comment>
<comment type="subcellular location">
    <subcellularLocation>
        <location evidence="1">Secreted</location>
    </subcellularLocation>
</comment>
<comment type="similarity">
    <text evidence="4">Belongs to the TGF-beta family.</text>
</comment>
<feature type="signal peptide" evidence="3">
    <location>
        <begin position="1"/>
        <end position="23"/>
    </location>
</feature>
<feature type="propeptide" id="PRO_0000033972" evidence="3">
    <location>
        <begin position="24"/>
        <end position="266"/>
    </location>
</feature>
<feature type="chain" id="PRO_0000033973" description="Growth/differentiation factor 8">
    <location>
        <begin position="267"/>
        <end position="375"/>
    </location>
</feature>
<feature type="glycosylation site" description="N-linked (GlcNAc...) asparagine" evidence="3">
    <location>
        <position position="71"/>
    </location>
</feature>
<feature type="disulfide bond" evidence="2">
    <location>
        <begin position="272"/>
        <end position="282"/>
    </location>
</feature>
<feature type="disulfide bond" evidence="1">
    <location>
        <begin position="281"/>
        <end position="340"/>
    </location>
</feature>
<feature type="disulfide bond" evidence="1">
    <location>
        <begin position="309"/>
        <end position="372"/>
    </location>
</feature>
<feature type="disulfide bond" evidence="1">
    <location>
        <begin position="313"/>
        <end position="374"/>
    </location>
</feature>
<feature type="disulfide bond" description="Interchain" evidence="1">
    <location>
        <position position="339"/>
    </location>
</feature>
<feature type="sequence conflict" description="In Ref. 3; AAK18000." evidence="4" ref="3">
    <original>S</original>
    <variation>P</variation>
    <location>
        <position position="335"/>
    </location>
</feature>
<accession>O42220</accession>
<accession>Q53YW8</accession>
<accession>Q98SP0</accession>
<evidence type="ECO:0000250" key="1"/>
<evidence type="ECO:0000250" key="2">
    <source>
        <dbReference type="UniProtKB" id="O08689"/>
    </source>
</evidence>
<evidence type="ECO:0000255" key="3"/>
<evidence type="ECO:0000305" key="4"/>
<protein>
    <recommendedName>
        <fullName>Growth/differentiation factor 8</fullName>
        <shortName>GDF-8</shortName>
    </recommendedName>
    <alternativeName>
        <fullName>Myostatin</fullName>
    </alternativeName>
</protein>
<organism>
    <name type="scientific">Gallus gallus</name>
    <name type="common">Chicken</name>
    <dbReference type="NCBI Taxonomy" id="9031"/>
    <lineage>
        <taxon>Eukaryota</taxon>
        <taxon>Metazoa</taxon>
        <taxon>Chordata</taxon>
        <taxon>Craniata</taxon>
        <taxon>Vertebrata</taxon>
        <taxon>Euteleostomi</taxon>
        <taxon>Archelosauria</taxon>
        <taxon>Archosauria</taxon>
        <taxon>Dinosauria</taxon>
        <taxon>Saurischia</taxon>
        <taxon>Theropoda</taxon>
        <taxon>Coelurosauria</taxon>
        <taxon>Aves</taxon>
        <taxon>Neognathae</taxon>
        <taxon>Galloanserae</taxon>
        <taxon>Galliformes</taxon>
        <taxon>Phasianidae</taxon>
        <taxon>Phasianinae</taxon>
        <taxon>Gallus</taxon>
    </lineage>
</organism>
<proteinExistence type="evidence at transcript level"/>
<name>GDF8_CHICK</name>
<keyword id="KW-0165">Cleavage on pair of basic residues</keyword>
<keyword id="KW-0202">Cytokine</keyword>
<keyword id="KW-1015">Disulfide bond</keyword>
<keyword id="KW-0325">Glycoprotein</keyword>
<keyword id="KW-0339">Growth factor</keyword>
<keyword id="KW-1185">Reference proteome</keyword>
<keyword id="KW-0964">Secreted</keyword>
<keyword id="KW-0732">Signal</keyword>
<gene>
    <name type="primary">MSTN</name>
    <name type="synonym">GDF8</name>
</gene>
<reference key="1">
    <citation type="journal article" date="1997" name="Proc. Natl. Acad. Sci. U.S.A.">
        <title>Double muscling in cattle due to mutations in the myostatin gene.</title>
        <authorList>
            <person name="McPherron A.C."/>
            <person name="Lee S.-J."/>
        </authorList>
    </citation>
    <scope>NUCLEOTIDE SEQUENCE [MRNA]</scope>
    <source>
        <strain>White leghorn</strain>
        <tissue>Skeletal muscle</tissue>
    </source>
</reference>
<reference key="2">
    <citation type="submission" date="2003-10" db="EMBL/GenBank/DDBJ databases">
        <title>Cloning and sequencing analysis of myostatin from chicken and goose.</title>
        <authorList>
            <person name="Ma X."/>
            <person name="Shi Z."/>
            <person name="Cao Y."/>
        </authorList>
    </citation>
    <scope>NUCLEOTIDE SEQUENCE [MRNA]</scope>
    <source>
        <tissue>Skeletal muscle</tissue>
    </source>
</reference>
<reference key="3">
    <citation type="journal article" date="2004" name="Anim. Genet.">
        <title>Comparison of avian myostatin genes.</title>
        <authorList>
            <person name="Gu Z."/>
            <person name="Zhang Y."/>
            <person name="Shi P."/>
            <person name="Zhang Y.P."/>
            <person name="Zhu D."/>
            <person name="Li H."/>
        </authorList>
    </citation>
    <scope>NUCLEOTIDE SEQUENCE [GENOMIC DNA]</scope>
</reference>
<dbReference type="EMBL" id="AF019621">
    <property type="protein sequence ID" value="AAB86688.1"/>
    <property type="molecule type" value="mRNA"/>
</dbReference>
<dbReference type="EMBL" id="AY448007">
    <property type="protein sequence ID" value="AAR18244.1"/>
    <property type="molecule type" value="mRNA"/>
</dbReference>
<dbReference type="EMBL" id="AF346599">
    <property type="protein sequence ID" value="AAK18000.1"/>
    <property type="molecule type" value="Genomic_DNA"/>
</dbReference>
<dbReference type="RefSeq" id="NP_001001461.1">
    <property type="nucleotide sequence ID" value="NM_001001461.2"/>
</dbReference>
<dbReference type="SMR" id="O42220"/>
<dbReference type="FunCoup" id="O42220">
    <property type="interactions" value="53"/>
</dbReference>
<dbReference type="STRING" id="9031.ENSGALP00000045551"/>
<dbReference type="GlyCosmos" id="O42220">
    <property type="glycosylation" value="1 site, No reported glycans"/>
</dbReference>
<dbReference type="GlyGen" id="O42220">
    <property type="glycosylation" value="1 site"/>
</dbReference>
<dbReference type="PaxDb" id="9031-ENSGALP00000003662"/>
<dbReference type="Ensembl" id="ENSGALT00010030820.1">
    <property type="protein sequence ID" value="ENSGALP00010017884.1"/>
    <property type="gene ID" value="ENSGALG00010012852.1"/>
</dbReference>
<dbReference type="GeneID" id="373964"/>
<dbReference type="KEGG" id="gga:373964"/>
<dbReference type="CTD" id="2660"/>
<dbReference type="VEuPathDB" id="HostDB:geneid_373964"/>
<dbReference type="eggNOG" id="KOG3900">
    <property type="taxonomic scope" value="Eukaryota"/>
</dbReference>
<dbReference type="GeneTree" id="ENSGT00940000160657"/>
<dbReference type="HOGENOM" id="CLU_020515_6_1_1"/>
<dbReference type="InParanoid" id="O42220"/>
<dbReference type="OMA" id="CNACMWR"/>
<dbReference type="OrthoDB" id="5948587at2759"/>
<dbReference type="PhylomeDB" id="O42220"/>
<dbReference type="TreeFam" id="TF318514"/>
<dbReference type="PRO" id="PR:O42220"/>
<dbReference type="Proteomes" id="UP000000539">
    <property type="component" value="Chromosome 7"/>
</dbReference>
<dbReference type="Bgee" id="ENSGALG00000039458">
    <property type="expression patterns" value="Expressed in skeletal muscle tissue and 5 other cell types or tissues"/>
</dbReference>
<dbReference type="GO" id="GO:0005615">
    <property type="term" value="C:extracellular space"/>
    <property type="evidence" value="ECO:0000314"/>
    <property type="project" value="AgBase"/>
</dbReference>
<dbReference type="GO" id="GO:0005125">
    <property type="term" value="F:cytokine activity"/>
    <property type="evidence" value="ECO:0000318"/>
    <property type="project" value="GO_Central"/>
</dbReference>
<dbReference type="GO" id="GO:0008083">
    <property type="term" value="F:growth factor activity"/>
    <property type="evidence" value="ECO:0007669"/>
    <property type="project" value="UniProtKB-KW"/>
</dbReference>
<dbReference type="GO" id="GO:0008201">
    <property type="term" value="F:heparin binding"/>
    <property type="evidence" value="ECO:0007669"/>
    <property type="project" value="Ensembl"/>
</dbReference>
<dbReference type="GO" id="GO:0042803">
    <property type="term" value="F:protein homodimerization activity"/>
    <property type="evidence" value="ECO:0007669"/>
    <property type="project" value="Ensembl"/>
</dbReference>
<dbReference type="GO" id="GO:0043539">
    <property type="term" value="F:protein serine/threonine kinase activator activity"/>
    <property type="evidence" value="ECO:0007669"/>
    <property type="project" value="Ensembl"/>
</dbReference>
<dbReference type="GO" id="GO:0071549">
    <property type="term" value="P:cellular response to dexamethasone stimulus"/>
    <property type="evidence" value="ECO:0007669"/>
    <property type="project" value="Ensembl"/>
</dbReference>
<dbReference type="GO" id="GO:0009792">
    <property type="term" value="P:embryo development ending in birth or egg hatching"/>
    <property type="evidence" value="ECO:0000270"/>
    <property type="project" value="AgBase"/>
</dbReference>
<dbReference type="GO" id="GO:0046716">
    <property type="term" value="P:muscle cell cellular homeostasis"/>
    <property type="evidence" value="ECO:0007669"/>
    <property type="project" value="Ensembl"/>
</dbReference>
<dbReference type="GO" id="GO:0033002">
    <property type="term" value="P:muscle cell proliferation"/>
    <property type="evidence" value="ECO:0000314"/>
    <property type="project" value="AgBase"/>
</dbReference>
<dbReference type="GO" id="GO:0014839">
    <property type="term" value="P:myoblast migration involved in skeletal muscle regeneration"/>
    <property type="evidence" value="ECO:0007669"/>
    <property type="project" value="Ensembl"/>
</dbReference>
<dbReference type="GO" id="GO:0046627">
    <property type="term" value="P:negative regulation of insulin receptor signaling pathway"/>
    <property type="evidence" value="ECO:0007669"/>
    <property type="project" value="Ensembl"/>
</dbReference>
<dbReference type="GO" id="GO:0045662">
    <property type="term" value="P:negative regulation of myoblast differentiation"/>
    <property type="evidence" value="ECO:0007669"/>
    <property type="project" value="Ensembl"/>
</dbReference>
<dbReference type="GO" id="GO:2000818">
    <property type="term" value="P:negative regulation of myoblast proliferation"/>
    <property type="evidence" value="ECO:0000250"/>
    <property type="project" value="AgBase"/>
</dbReference>
<dbReference type="GO" id="GO:0051898">
    <property type="term" value="P:negative regulation of phosphatidylinositol 3-kinase/protein kinase B signal transduction"/>
    <property type="evidence" value="ECO:0007669"/>
    <property type="project" value="Ensembl"/>
</dbReference>
<dbReference type="GO" id="GO:1902725">
    <property type="term" value="P:negative regulation of satellite cell differentiation"/>
    <property type="evidence" value="ECO:0000250"/>
    <property type="project" value="AgBase"/>
</dbReference>
<dbReference type="GO" id="GO:1902723">
    <property type="term" value="P:negative regulation of skeletal muscle satellite cell proliferation"/>
    <property type="evidence" value="ECO:0000250"/>
    <property type="project" value="AgBase"/>
</dbReference>
<dbReference type="GO" id="GO:0048632">
    <property type="term" value="P:negative regulation of skeletal muscle tissue growth"/>
    <property type="evidence" value="ECO:0007669"/>
    <property type="project" value="Ensembl"/>
</dbReference>
<dbReference type="GO" id="GO:0045893">
    <property type="term" value="P:positive regulation of DNA-templated transcription"/>
    <property type="evidence" value="ECO:0007669"/>
    <property type="project" value="Ensembl"/>
</dbReference>
<dbReference type="GO" id="GO:0010592">
    <property type="term" value="P:positive regulation of lamellipodium assembly"/>
    <property type="evidence" value="ECO:0007669"/>
    <property type="project" value="Ensembl"/>
</dbReference>
<dbReference type="GO" id="GO:0010759">
    <property type="term" value="P:positive regulation of macrophage chemotaxis"/>
    <property type="evidence" value="ECO:0007669"/>
    <property type="project" value="Ensembl"/>
</dbReference>
<dbReference type="GO" id="GO:0045595">
    <property type="term" value="P:regulation of cell differentiation"/>
    <property type="evidence" value="ECO:0000303"/>
    <property type="project" value="AgBase"/>
</dbReference>
<dbReference type="GO" id="GO:0040008">
    <property type="term" value="P:regulation of growth"/>
    <property type="evidence" value="ECO:0000303"/>
    <property type="project" value="AgBase"/>
</dbReference>
<dbReference type="GO" id="GO:0014816">
    <property type="term" value="P:skeletal muscle satellite cell differentiation"/>
    <property type="evidence" value="ECO:0007669"/>
    <property type="project" value="Ensembl"/>
</dbReference>
<dbReference type="GO" id="GO:0007519">
    <property type="term" value="P:skeletal muscle tissue development"/>
    <property type="evidence" value="ECO:0000270"/>
    <property type="project" value="AgBase"/>
</dbReference>
<dbReference type="GO" id="GO:0007179">
    <property type="term" value="P:transforming growth factor beta receptor signaling pathway"/>
    <property type="evidence" value="ECO:0007669"/>
    <property type="project" value="Ensembl"/>
</dbReference>
<dbReference type="CDD" id="cd19388">
    <property type="entry name" value="TGF_beta_GDF8"/>
    <property type="match status" value="1"/>
</dbReference>
<dbReference type="FunFam" id="2.60.120.970:FF:000001">
    <property type="entry name" value="Growth/differentiation factor 8"/>
    <property type="match status" value="1"/>
</dbReference>
<dbReference type="FunFam" id="2.10.90.10:FF:000006">
    <property type="entry name" value="growth/differentiation factor 8"/>
    <property type="match status" value="1"/>
</dbReference>
<dbReference type="Gene3D" id="2.60.120.970">
    <property type="match status" value="1"/>
</dbReference>
<dbReference type="Gene3D" id="2.10.90.10">
    <property type="entry name" value="Cystine-knot cytokines"/>
    <property type="match status" value="1"/>
</dbReference>
<dbReference type="InterPro" id="IPR029034">
    <property type="entry name" value="Cystine-knot_cytokine"/>
</dbReference>
<dbReference type="InterPro" id="IPR001839">
    <property type="entry name" value="TGF-b_C"/>
</dbReference>
<dbReference type="InterPro" id="IPR001111">
    <property type="entry name" value="TGF-b_propeptide"/>
</dbReference>
<dbReference type="InterPro" id="IPR015615">
    <property type="entry name" value="TGF-beta-rel"/>
</dbReference>
<dbReference type="InterPro" id="IPR017948">
    <property type="entry name" value="TGFb_CS"/>
</dbReference>
<dbReference type="PANTHER" id="PTHR11848:SF150">
    <property type="entry name" value="GROWTH_DIFFERENTIATION FACTOR 8"/>
    <property type="match status" value="1"/>
</dbReference>
<dbReference type="PANTHER" id="PTHR11848">
    <property type="entry name" value="TGF-BETA FAMILY"/>
    <property type="match status" value="1"/>
</dbReference>
<dbReference type="Pfam" id="PF00019">
    <property type="entry name" value="TGF_beta"/>
    <property type="match status" value="1"/>
</dbReference>
<dbReference type="Pfam" id="PF00688">
    <property type="entry name" value="TGFb_propeptide"/>
    <property type="match status" value="1"/>
</dbReference>
<dbReference type="SMART" id="SM00204">
    <property type="entry name" value="TGFB"/>
    <property type="match status" value="1"/>
</dbReference>
<dbReference type="SUPFAM" id="SSF57501">
    <property type="entry name" value="Cystine-knot cytokines"/>
    <property type="match status" value="1"/>
</dbReference>
<dbReference type="PROSITE" id="PS00250">
    <property type="entry name" value="TGF_BETA_1"/>
    <property type="match status" value="1"/>
</dbReference>
<dbReference type="PROSITE" id="PS51362">
    <property type="entry name" value="TGF_BETA_2"/>
    <property type="match status" value="1"/>
</dbReference>
<sequence>MQKLAVYVYIYLFMQIAVDPVALDGSSQPTENAEKDGLCNACTWRQNTKSSRIEAIKIQILSKLRLEQAPNISRDVIKQLLPKAPPLQELIDQYDVQRDDSSDGSLEDDDYHATTETIITMPTESDFLVQMEGKPKCCFFKFSSKIQYNKVVKAQLWIYLRQVQKPTTVFVQILRLIKPMKDGTRYTGIRSLKLDMNPGTGIWQSIDVKTVLQNWLKQPESNLGIEIKAFDETGRDLAVTFPGPGEDGLNPFLEVRVTDTPKRSRRDFGLDCDEHSTESRCCRYPLTVDFEAFGWDWIIAPKRYKANYCSGECEFVFLQKYPHTHLVHQANPRGSAGPCCTPTKMSPINMLYFNGKEQIIYGKIPAMVVDRCGCS</sequence>